<keyword id="KW-0963">Cytoplasm</keyword>
<keyword id="KW-0255">Endonuclease</keyword>
<keyword id="KW-0378">Hydrolase</keyword>
<keyword id="KW-0479">Metal-binding</keyword>
<keyword id="KW-0540">Nuclease</keyword>
<keyword id="KW-0690">Ribosome biogenesis</keyword>
<keyword id="KW-0698">rRNA processing</keyword>
<keyword id="KW-0862">Zinc</keyword>
<reference key="1">
    <citation type="journal article" date="2006" name="Proc. Natl. Acad. Sci. U.S.A.">
        <title>Molecular genetic anatomy of inter- and intraserotype variation in the human bacterial pathogen group A Streptococcus.</title>
        <authorList>
            <person name="Beres S.B."/>
            <person name="Richter E.W."/>
            <person name="Nagiec M.J."/>
            <person name="Sumby P."/>
            <person name="Porcella S.F."/>
            <person name="DeLeo F.R."/>
            <person name="Musser J.M."/>
        </authorList>
    </citation>
    <scope>NUCLEOTIDE SEQUENCE [LARGE SCALE GENOMIC DNA]</scope>
    <source>
        <strain>MGAS10270</strain>
    </source>
</reference>
<comment type="function">
    <text evidence="1">Single strand-specific metallo-endoribonuclease involved in late-stage 70S ribosome quality control and in maturation of the 3' terminus of the 16S rRNA.</text>
</comment>
<comment type="cofactor">
    <cofactor evidence="1">
        <name>Zn(2+)</name>
        <dbReference type="ChEBI" id="CHEBI:29105"/>
    </cofactor>
    <text evidence="1">Binds 1 zinc ion.</text>
</comment>
<comment type="subcellular location">
    <subcellularLocation>
        <location evidence="1">Cytoplasm</location>
    </subcellularLocation>
</comment>
<comment type="similarity">
    <text evidence="1">Belongs to the endoribonuclease YbeY family.</text>
</comment>
<comment type="sequence caution" evidence="2">
    <conflict type="erroneous initiation">
        <sequence resource="EMBL-CDS" id="ABF33454"/>
    </conflict>
</comment>
<feature type="chain" id="PRO_0000284328" description="Endoribonuclease YbeY">
    <location>
        <begin position="1"/>
        <end position="165"/>
    </location>
</feature>
<feature type="binding site" evidence="1">
    <location>
        <position position="130"/>
    </location>
    <ligand>
        <name>Zn(2+)</name>
        <dbReference type="ChEBI" id="CHEBI:29105"/>
        <note>catalytic</note>
    </ligand>
</feature>
<feature type="binding site" evidence="1">
    <location>
        <position position="134"/>
    </location>
    <ligand>
        <name>Zn(2+)</name>
        <dbReference type="ChEBI" id="CHEBI:29105"/>
        <note>catalytic</note>
    </ligand>
</feature>
<feature type="binding site" evidence="1">
    <location>
        <position position="140"/>
    </location>
    <ligand>
        <name>Zn(2+)</name>
        <dbReference type="ChEBI" id="CHEBI:29105"/>
        <note>catalytic</note>
    </ligand>
</feature>
<organism>
    <name type="scientific">Streptococcus pyogenes serotype M2 (strain MGAS10270)</name>
    <dbReference type="NCBI Taxonomy" id="370552"/>
    <lineage>
        <taxon>Bacteria</taxon>
        <taxon>Bacillati</taxon>
        <taxon>Bacillota</taxon>
        <taxon>Bacilli</taxon>
        <taxon>Lactobacillales</taxon>
        <taxon>Streptococcaceae</taxon>
        <taxon>Streptococcus</taxon>
    </lineage>
</organism>
<accession>Q1JI69</accession>
<name>YBEY_STRPD</name>
<protein>
    <recommendedName>
        <fullName evidence="1">Endoribonuclease YbeY</fullName>
        <ecNumber evidence="1">3.1.-.-</ecNumber>
    </recommendedName>
</protein>
<sequence>MYIEMIDETGQVSQEIMEQTLDLLNFAAQKTGKEEKEMSVTFVTNERSHELNLEYRDTDRPTDVISLEYKPETPILFSQEDLAADPSLAEMMAEFDAYIGELFISIDKAREQSQEYGHSFEREMGFLAVHGFLHINGYDHYTLEEEKEMFTLQEEILTAYGLTRQ</sequence>
<gene>
    <name evidence="1" type="primary">ybeY</name>
    <name type="ordered locus">MGAS10270_Spy0389</name>
</gene>
<evidence type="ECO:0000255" key="1">
    <source>
        <dbReference type="HAMAP-Rule" id="MF_00009"/>
    </source>
</evidence>
<evidence type="ECO:0000305" key="2"/>
<proteinExistence type="inferred from homology"/>
<dbReference type="EC" id="3.1.-.-" evidence="1"/>
<dbReference type="EMBL" id="CP000260">
    <property type="protein sequence ID" value="ABF33454.1"/>
    <property type="status" value="ALT_INIT"/>
    <property type="molecule type" value="Genomic_DNA"/>
</dbReference>
<dbReference type="RefSeq" id="WP_002985748.1">
    <property type="nucleotide sequence ID" value="NZ_CVUH01000002.1"/>
</dbReference>
<dbReference type="SMR" id="Q1JI69"/>
<dbReference type="GeneID" id="69901291"/>
<dbReference type="KEGG" id="sph:MGAS10270_Spy0389"/>
<dbReference type="HOGENOM" id="CLU_106710_3_0_9"/>
<dbReference type="Proteomes" id="UP000002436">
    <property type="component" value="Chromosome"/>
</dbReference>
<dbReference type="GO" id="GO:0005737">
    <property type="term" value="C:cytoplasm"/>
    <property type="evidence" value="ECO:0007669"/>
    <property type="project" value="UniProtKB-SubCell"/>
</dbReference>
<dbReference type="GO" id="GO:0004222">
    <property type="term" value="F:metalloendopeptidase activity"/>
    <property type="evidence" value="ECO:0007669"/>
    <property type="project" value="InterPro"/>
</dbReference>
<dbReference type="GO" id="GO:0004521">
    <property type="term" value="F:RNA endonuclease activity"/>
    <property type="evidence" value="ECO:0007669"/>
    <property type="project" value="UniProtKB-UniRule"/>
</dbReference>
<dbReference type="GO" id="GO:0008270">
    <property type="term" value="F:zinc ion binding"/>
    <property type="evidence" value="ECO:0007669"/>
    <property type="project" value="UniProtKB-UniRule"/>
</dbReference>
<dbReference type="GO" id="GO:0006364">
    <property type="term" value="P:rRNA processing"/>
    <property type="evidence" value="ECO:0007669"/>
    <property type="project" value="UniProtKB-UniRule"/>
</dbReference>
<dbReference type="Gene3D" id="3.40.390.30">
    <property type="entry name" value="Metalloproteases ('zincins'), catalytic domain"/>
    <property type="match status" value="1"/>
</dbReference>
<dbReference type="HAMAP" id="MF_00009">
    <property type="entry name" value="Endoribonucl_YbeY"/>
    <property type="match status" value="1"/>
</dbReference>
<dbReference type="InterPro" id="IPR023091">
    <property type="entry name" value="MetalPrtase_cat_dom_sf_prd"/>
</dbReference>
<dbReference type="InterPro" id="IPR002036">
    <property type="entry name" value="YbeY"/>
</dbReference>
<dbReference type="InterPro" id="IPR020549">
    <property type="entry name" value="YbeY_CS"/>
</dbReference>
<dbReference type="NCBIfam" id="TIGR00043">
    <property type="entry name" value="rRNA maturation RNase YbeY"/>
    <property type="match status" value="1"/>
</dbReference>
<dbReference type="PANTHER" id="PTHR46986">
    <property type="entry name" value="ENDORIBONUCLEASE YBEY, CHLOROPLASTIC"/>
    <property type="match status" value="1"/>
</dbReference>
<dbReference type="PANTHER" id="PTHR46986:SF1">
    <property type="entry name" value="ENDORIBONUCLEASE YBEY, CHLOROPLASTIC"/>
    <property type="match status" value="1"/>
</dbReference>
<dbReference type="Pfam" id="PF02130">
    <property type="entry name" value="YbeY"/>
    <property type="match status" value="1"/>
</dbReference>
<dbReference type="SUPFAM" id="SSF55486">
    <property type="entry name" value="Metalloproteases ('zincins'), catalytic domain"/>
    <property type="match status" value="1"/>
</dbReference>
<dbReference type="PROSITE" id="PS01306">
    <property type="entry name" value="UPF0054"/>
    <property type="match status" value="1"/>
</dbReference>